<evidence type="ECO:0000255" key="1">
    <source>
        <dbReference type="HAMAP-Rule" id="MF_00081"/>
    </source>
</evidence>
<proteinExistence type="inferred from homology"/>
<feature type="chain" id="PRO_1000057534" description="Heat-inducible transcription repressor HrcA">
    <location>
        <begin position="1"/>
        <end position="343"/>
    </location>
</feature>
<organism>
    <name type="scientific">Bacillus pumilus (strain SAFR-032)</name>
    <dbReference type="NCBI Taxonomy" id="315750"/>
    <lineage>
        <taxon>Bacteria</taxon>
        <taxon>Bacillati</taxon>
        <taxon>Bacillota</taxon>
        <taxon>Bacilli</taxon>
        <taxon>Bacillales</taxon>
        <taxon>Bacillaceae</taxon>
        <taxon>Bacillus</taxon>
    </lineage>
</organism>
<protein>
    <recommendedName>
        <fullName evidence="1">Heat-inducible transcription repressor HrcA</fullName>
    </recommendedName>
</protein>
<dbReference type="EMBL" id="CP000813">
    <property type="protein sequence ID" value="ABV62951.1"/>
    <property type="molecule type" value="Genomic_DNA"/>
</dbReference>
<dbReference type="RefSeq" id="WP_012010631.1">
    <property type="nucleotide sequence ID" value="NZ_VEIS01000005.1"/>
</dbReference>
<dbReference type="SMR" id="A8FFD4"/>
<dbReference type="STRING" id="315750.BPUM_2282"/>
<dbReference type="GeneID" id="5621548"/>
<dbReference type="KEGG" id="bpu:BPUM_2282"/>
<dbReference type="eggNOG" id="COG1420">
    <property type="taxonomic scope" value="Bacteria"/>
</dbReference>
<dbReference type="HOGENOM" id="CLU_050019_1_0_9"/>
<dbReference type="OrthoDB" id="9783139at2"/>
<dbReference type="Proteomes" id="UP000001355">
    <property type="component" value="Chromosome"/>
</dbReference>
<dbReference type="GO" id="GO:0003677">
    <property type="term" value="F:DNA binding"/>
    <property type="evidence" value="ECO:0007669"/>
    <property type="project" value="InterPro"/>
</dbReference>
<dbReference type="GO" id="GO:0045892">
    <property type="term" value="P:negative regulation of DNA-templated transcription"/>
    <property type="evidence" value="ECO:0007669"/>
    <property type="project" value="UniProtKB-UniRule"/>
</dbReference>
<dbReference type="FunFam" id="1.10.10.10:FF:000049">
    <property type="entry name" value="Heat-inducible transcription repressor HrcA"/>
    <property type="match status" value="1"/>
</dbReference>
<dbReference type="Gene3D" id="3.30.450.40">
    <property type="match status" value="1"/>
</dbReference>
<dbReference type="Gene3D" id="3.30.390.60">
    <property type="entry name" value="Heat-inducible transcription repressor hrca homolog, domain 3"/>
    <property type="match status" value="1"/>
</dbReference>
<dbReference type="Gene3D" id="1.10.10.10">
    <property type="entry name" value="Winged helix-like DNA-binding domain superfamily/Winged helix DNA-binding domain"/>
    <property type="match status" value="1"/>
</dbReference>
<dbReference type="HAMAP" id="MF_00081">
    <property type="entry name" value="HrcA"/>
    <property type="match status" value="1"/>
</dbReference>
<dbReference type="InterPro" id="IPR029016">
    <property type="entry name" value="GAF-like_dom_sf"/>
</dbReference>
<dbReference type="InterPro" id="IPR002571">
    <property type="entry name" value="HrcA"/>
</dbReference>
<dbReference type="InterPro" id="IPR021153">
    <property type="entry name" value="HrcA_C"/>
</dbReference>
<dbReference type="InterPro" id="IPR036388">
    <property type="entry name" value="WH-like_DNA-bd_sf"/>
</dbReference>
<dbReference type="InterPro" id="IPR036390">
    <property type="entry name" value="WH_DNA-bd_sf"/>
</dbReference>
<dbReference type="InterPro" id="IPR023120">
    <property type="entry name" value="WHTH_transcript_rep_HrcA_IDD"/>
</dbReference>
<dbReference type="NCBIfam" id="TIGR00331">
    <property type="entry name" value="hrcA"/>
    <property type="match status" value="1"/>
</dbReference>
<dbReference type="PANTHER" id="PTHR34824">
    <property type="entry name" value="HEAT-INDUCIBLE TRANSCRIPTION REPRESSOR HRCA"/>
    <property type="match status" value="1"/>
</dbReference>
<dbReference type="PANTHER" id="PTHR34824:SF1">
    <property type="entry name" value="HEAT-INDUCIBLE TRANSCRIPTION REPRESSOR HRCA"/>
    <property type="match status" value="1"/>
</dbReference>
<dbReference type="Pfam" id="PF01628">
    <property type="entry name" value="HrcA"/>
    <property type="match status" value="1"/>
</dbReference>
<dbReference type="PIRSF" id="PIRSF005485">
    <property type="entry name" value="HrcA"/>
    <property type="match status" value="1"/>
</dbReference>
<dbReference type="SUPFAM" id="SSF55781">
    <property type="entry name" value="GAF domain-like"/>
    <property type="match status" value="1"/>
</dbReference>
<dbReference type="SUPFAM" id="SSF46785">
    <property type="entry name" value="Winged helix' DNA-binding domain"/>
    <property type="match status" value="1"/>
</dbReference>
<comment type="function">
    <text evidence="1">Negative regulator of class I heat shock genes (grpE-dnaK-dnaJ and groELS operons). Prevents heat-shock induction of these operons.</text>
</comment>
<comment type="similarity">
    <text evidence="1">Belongs to the HrcA family.</text>
</comment>
<accession>A8FFD4</accession>
<gene>
    <name evidence="1" type="primary">hrcA</name>
    <name type="ordered locus">BPUM_2282</name>
</gene>
<name>HRCA_BACP2</name>
<reference key="1">
    <citation type="journal article" date="2007" name="PLoS ONE">
        <title>Paradoxical DNA repair and peroxide resistance gene conservation in Bacillus pumilus SAFR-032.</title>
        <authorList>
            <person name="Gioia J."/>
            <person name="Yerrapragada S."/>
            <person name="Qin X."/>
            <person name="Jiang H."/>
            <person name="Igboeli O.C."/>
            <person name="Muzny D."/>
            <person name="Dugan-Rocha S."/>
            <person name="Ding Y."/>
            <person name="Hawes A."/>
            <person name="Liu W."/>
            <person name="Perez L."/>
            <person name="Kovar C."/>
            <person name="Dinh H."/>
            <person name="Lee S."/>
            <person name="Nazareth L."/>
            <person name="Blyth P."/>
            <person name="Holder M."/>
            <person name="Buhay C."/>
            <person name="Tirumalai M.R."/>
            <person name="Liu Y."/>
            <person name="Dasgupta I."/>
            <person name="Bokhetache L."/>
            <person name="Fujita M."/>
            <person name="Karouia F."/>
            <person name="Eswara Moorthy P."/>
            <person name="Siefert J."/>
            <person name="Uzman A."/>
            <person name="Buzumbo P."/>
            <person name="Verma A."/>
            <person name="Zwiya H."/>
            <person name="McWilliams B.D."/>
            <person name="Olowu A."/>
            <person name="Clinkenbeard K.D."/>
            <person name="Newcombe D."/>
            <person name="Golebiewski L."/>
            <person name="Petrosino J.F."/>
            <person name="Nicholson W.L."/>
            <person name="Fox G.E."/>
            <person name="Venkateswaran K."/>
            <person name="Highlander S.K."/>
            <person name="Weinstock G.M."/>
        </authorList>
    </citation>
    <scope>NUCLEOTIDE SEQUENCE [LARGE SCALE GENOMIC DNA]</scope>
    <source>
        <strain>SAFR-032</strain>
    </source>
</reference>
<keyword id="KW-0678">Repressor</keyword>
<keyword id="KW-0346">Stress response</keyword>
<keyword id="KW-0804">Transcription</keyword>
<keyword id="KW-0805">Transcription regulation</keyword>
<sequence>MLTNRQLLILQVIINDFIRSAQPVGSRTLSKKEDITFSSATIRNEMADLEELGFIEKTHSSSGRIPSEKGYRYYVDHLLSPRKLSSNELVLIQSAFQEKIFELEKTVQKSAEILSDLTNYTSIVLGPKLSENRLKQIQLVPVQPNKAVAIMITDSGHVENKTITFSEHLDVSDIEKLMNILNSRLAGVPMDQLKDRMYKEVVMLLRTHLKDYDHILDALGNTFTSTQNESKLFFGGKINMLNQPEFHDIDRIRSLMMLIEQKNDVMQLFHPNQQGITIKIGSENNLEAMENCSLITATYSIDQKSLGSIAVIGPTRMDYGRVVSLLHHVSKDLSNALSNLYDE</sequence>